<comment type="function">
    <text evidence="3">Odorant receptor. Activated by isovaleric acid.</text>
</comment>
<comment type="subcellular location">
    <subcellularLocation>
        <location>Cell membrane</location>
        <topology>Multi-pass membrane protein</topology>
    </subcellularLocation>
</comment>
<comment type="polymorphism">
    <text>A stop codon in the gene coding for this protein at position Gln-227 is responsible for functional diversity thus producing a pseudogene. Hypersensitivity towards isovaleric acid is seen predominantly in individuals who carry at least one copy of the intact allele.</text>
</comment>
<comment type="similarity">
    <text evidence="2">Belongs to the G-protein coupled receptor 1 family.</text>
</comment>
<comment type="online information" name="Human Olfactory Receptor Data Exploratorium (HORDE)">
    <link uri="http://genome.weizmann.ac.il/horde/card/index/symbol:OR11H7P"/>
</comment>
<feature type="chain" id="PRO_0000314463" description="Olfactory receptor 11H7">
    <location>
        <begin position="1"/>
        <end position="314"/>
    </location>
</feature>
<feature type="topological domain" description="Extracellular" evidence="1">
    <location>
        <begin position="1"/>
        <end position="24"/>
    </location>
</feature>
<feature type="transmembrane region" description="Helical; Name=1" evidence="1">
    <location>
        <begin position="25"/>
        <end position="45"/>
    </location>
</feature>
<feature type="topological domain" description="Cytoplasmic" evidence="1">
    <location>
        <begin position="46"/>
        <end position="57"/>
    </location>
</feature>
<feature type="transmembrane region" description="Helical; Name=2" evidence="1">
    <location>
        <begin position="58"/>
        <end position="78"/>
    </location>
</feature>
<feature type="topological domain" description="Extracellular" evidence="1">
    <location>
        <begin position="79"/>
        <end position="97"/>
    </location>
</feature>
<feature type="transmembrane region" description="Helical; Name=3" evidence="1">
    <location>
        <begin position="98"/>
        <end position="118"/>
    </location>
</feature>
<feature type="topological domain" description="Cytoplasmic" evidence="1">
    <location>
        <begin position="119"/>
        <end position="142"/>
    </location>
</feature>
<feature type="transmembrane region" description="Helical; Name=4" evidence="1">
    <location>
        <begin position="143"/>
        <end position="163"/>
    </location>
</feature>
<feature type="topological domain" description="Extracellular" evidence="1">
    <location>
        <begin position="164"/>
        <end position="201"/>
    </location>
</feature>
<feature type="transmembrane region" description="Helical; Name=5" evidence="1">
    <location>
        <begin position="202"/>
        <end position="222"/>
    </location>
</feature>
<feature type="topological domain" description="Cytoplasmic" evidence="1">
    <location>
        <begin position="223"/>
        <end position="244"/>
    </location>
</feature>
<feature type="transmembrane region" description="Helical; Name=6" evidence="1">
    <location>
        <begin position="245"/>
        <end position="265"/>
    </location>
</feature>
<feature type="topological domain" description="Extracellular" evidence="1">
    <location>
        <begin position="266"/>
        <end position="271"/>
    </location>
</feature>
<feature type="transmembrane region" description="Helical; Name=7" evidence="1">
    <location>
        <begin position="272"/>
        <end position="292"/>
    </location>
</feature>
<feature type="topological domain" description="Cytoplasmic" evidence="1">
    <location>
        <begin position="293"/>
        <end position="314"/>
    </location>
</feature>
<feature type="glycosylation site" description="N-linked (GlcNAc...) asparagine" evidence="1">
    <location>
        <position position="2"/>
    </location>
</feature>
<feature type="disulfide bond" evidence="2">
    <location>
        <begin position="97"/>
        <end position="179"/>
    </location>
</feature>
<sequence>MNNSQISTVTQFVLLGFPGPWKIQIIFFSMILLVYIFTLTGNMAIICAVRWDHRLHTPMYVLLANFSFLEIWYVTCTVPNMLVNFFSKTKTISFSGCFTQFHFFFSLGTTECFFLCVMAYDRYLAICHPLHYPSIMTGQLCGILVSLCWLIGFLGHSISIFFIFQLPFCGPNIIDHFLCDVDPLMALSSAPTHIIGHVFHSVSSLFINLTMVYILGSYTLVLRTVLQVPSSAGWQKAISTCGSHLVVVSLFYGAIMLMYVSPTPGNSVAMHKLITLIYSVVTPVLNPLIYSLRNKDMKYALHHVFCGMRIIQRS</sequence>
<protein>
    <recommendedName>
        <fullName>Olfactory receptor 11H7</fullName>
    </recommendedName>
    <alternativeName>
        <fullName>Olfactory receptor OR14-32</fullName>
    </alternativeName>
</protein>
<reference key="1">
    <citation type="submission" date="2001-07" db="EMBL/GenBank/DDBJ databases">
        <title>Genome-wide discovery and analysis of human seven transmembrane helix receptor genes.</title>
        <authorList>
            <person name="Suwa M."/>
            <person name="Sato T."/>
            <person name="Okouchi I."/>
            <person name="Arita M."/>
            <person name="Futami K."/>
            <person name="Matsumoto S."/>
            <person name="Tsutsumi S."/>
            <person name="Aburatani H."/>
            <person name="Asai K."/>
            <person name="Akiyama Y."/>
        </authorList>
    </citation>
    <scope>NUCLEOTIDE SEQUENCE [GENOMIC DNA]</scope>
</reference>
<reference key="2">
    <citation type="journal article" date="2002" name="Genomics">
        <title>DEFOG: a practical scheme for deciphering families of genes.</title>
        <authorList>
            <person name="Fuchs T."/>
            <person name="Malecova B."/>
            <person name="Linhart C."/>
            <person name="Sharan R."/>
            <person name="Khen M."/>
            <person name="Herwig R."/>
            <person name="Shmulevich D."/>
            <person name="Elkon R."/>
            <person name="Steinfath M."/>
            <person name="O'Brien J.K."/>
            <person name="Radelof U."/>
            <person name="Lehrach H."/>
            <person name="Lancet D."/>
            <person name="Shamir R."/>
        </authorList>
    </citation>
    <scope>NUCLEOTIDE SEQUENCE [GENOMIC DNA] OF 68-283</scope>
</reference>
<reference key="3">
    <citation type="journal article" date="2003" name="Nature">
        <title>The DNA sequence and analysis of human chromosome 14.</title>
        <authorList>
            <person name="Heilig R."/>
            <person name="Eckenberg R."/>
            <person name="Petit J.-L."/>
            <person name="Fonknechten N."/>
            <person name="Da Silva C."/>
            <person name="Cattolico L."/>
            <person name="Levy M."/>
            <person name="Barbe V."/>
            <person name="De Berardinis V."/>
            <person name="Ureta-Vidal A."/>
            <person name="Pelletier E."/>
            <person name="Vico V."/>
            <person name="Anthouard V."/>
            <person name="Rowen L."/>
            <person name="Madan A."/>
            <person name="Qin S."/>
            <person name="Sun H."/>
            <person name="Du H."/>
            <person name="Pepin K."/>
            <person name="Artiguenave F."/>
            <person name="Robert C."/>
            <person name="Cruaud C."/>
            <person name="Bruels T."/>
            <person name="Jaillon O."/>
            <person name="Friedlander L."/>
            <person name="Samson G."/>
            <person name="Brottier P."/>
            <person name="Cure S."/>
            <person name="Segurens B."/>
            <person name="Aniere F."/>
            <person name="Samain S."/>
            <person name="Crespeau H."/>
            <person name="Abbasi N."/>
            <person name="Aiach N."/>
            <person name="Boscus D."/>
            <person name="Dickhoff R."/>
            <person name="Dors M."/>
            <person name="Dubois I."/>
            <person name="Friedman C."/>
            <person name="Gouyvenoux M."/>
            <person name="James R."/>
            <person name="Madan A."/>
            <person name="Mairey-Estrada B."/>
            <person name="Mangenot S."/>
            <person name="Martins N."/>
            <person name="Menard M."/>
            <person name="Oztas S."/>
            <person name="Ratcliffe A."/>
            <person name="Shaffer T."/>
            <person name="Trask B."/>
            <person name="Vacherie B."/>
            <person name="Bellemere C."/>
            <person name="Belser C."/>
            <person name="Besnard-Gonnet M."/>
            <person name="Bartol-Mavel D."/>
            <person name="Boutard M."/>
            <person name="Briez-Silla S."/>
            <person name="Combette S."/>
            <person name="Dufosse-Laurent V."/>
            <person name="Ferron C."/>
            <person name="Lechaplais C."/>
            <person name="Louesse C."/>
            <person name="Muselet D."/>
            <person name="Magdelenat G."/>
            <person name="Pateau E."/>
            <person name="Petit E."/>
            <person name="Sirvain-Trukniewicz P."/>
            <person name="Trybou A."/>
            <person name="Vega-Czarny N."/>
            <person name="Bataille E."/>
            <person name="Bluet E."/>
            <person name="Bordelais I."/>
            <person name="Dubois M."/>
            <person name="Dumont C."/>
            <person name="Guerin T."/>
            <person name="Haffray S."/>
            <person name="Hammadi R."/>
            <person name="Muanga J."/>
            <person name="Pellouin V."/>
            <person name="Robert D."/>
            <person name="Wunderle E."/>
            <person name="Gauguet G."/>
            <person name="Roy A."/>
            <person name="Sainte-Marthe L."/>
            <person name="Verdier J."/>
            <person name="Verdier-Discala C."/>
            <person name="Hillier L.W."/>
            <person name="Fulton L."/>
            <person name="McPherson J."/>
            <person name="Matsuda F."/>
            <person name="Wilson R."/>
            <person name="Scarpelli C."/>
            <person name="Gyapay G."/>
            <person name="Wincker P."/>
            <person name="Saurin W."/>
            <person name="Quetier F."/>
            <person name="Waterston R."/>
            <person name="Hood L."/>
            <person name="Weissenbach J."/>
        </authorList>
    </citation>
    <scope>NUCLEOTIDE SEQUENCE [LARGE SCALE GENOMIC DNA]</scope>
</reference>
<reference key="4">
    <citation type="journal article" date="2004" name="Proc. Natl. Acad. Sci. U.S.A.">
        <title>The human olfactory receptor gene family.</title>
        <authorList>
            <person name="Malnic B."/>
            <person name="Godfrey P.A."/>
            <person name="Buck L.B."/>
        </authorList>
    </citation>
    <scope>IDENTIFICATION</scope>
</reference>
<reference key="5">
    <citation type="journal article" date="2004" name="Proc. Natl. Acad. Sci. U.S.A.">
        <authorList>
            <person name="Malnic B."/>
            <person name="Godfrey P.A."/>
            <person name="Buck L.B."/>
        </authorList>
    </citation>
    <scope>ERRATUM OF PUBMED:14983052</scope>
</reference>
<reference key="6">
    <citation type="journal article" date="2003" name="Nat. Genet.">
        <title>Different noses for different people.</title>
        <authorList>
            <person name="Menashe I."/>
            <person name="Man O."/>
            <person name="Lancet D."/>
            <person name="Gilad Y."/>
        </authorList>
    </citation>
    <scope>POLYMORPHISM</scope>
</reference>
<reference key="7">
    <citation type="journal article" date="2007" name="PLoS Biol.">
        <title>Genetic elucidation of human hyperosmia to isovaleric acid.</title>
        <authorList>
            <person name="Menashe I."/>
            <person name="Abaffy T."/>
            <person name="Hasin Y."/>
            <person name="Goshen S."/>
            <person name="Yahalom V."/>
            <person name="Luetje C.W."/>
            <person name="Lancet D."/>
        </authorList>
    </citation>
    <scope>FUNCTION</scope>
    <scope>POLYMORPHISM</scope>
</reference>
<organism>
    <name type="scientific">Homo sapiens</name>
    <name type="common">Human</name>
    <dbReference type="NCBI Taxonomy" id="9606"/>
    <lineage>
        <taxon>Eukaryota</taxon>
        <taxon>Metazoa</taxon>
        <taxon>Chordata</taxon>
        <taxon>Craniata</taxon>
        <taxon>Vertebrata</taxon>
        <taxon>Euteleostomi</taxon>
        <taxon>Mammalia</taxon>
        <taxon>Eutheria</taxon>
        <taxon>Euarchontoglires</taxon>
        <taxon>Primates</taxon>
        <taxon>Haplorrhini</taxon>
        <taxon>Catarrhini</taxon>
        <taxon>Hominidae</taxon>
        <taxon>Homo</taxon>
    </lineage>
</organism>
<accession>Q8NGC8</accession>
<gene>
    <name type="primary">OR11H7</name>
    <name type="synonym">OR11H7P</name>
</gene>
<name>O11H7_HUMAN</name>
<proteinExistence type="inferred from homology"/>
<evidence type="ECO:0000255" key="1"/>
<evidence type="ECO:0000255" key="2">
    <source>
        <dbReference type="PROSITE-ProRule" id="PRU00521"/>
    </source>
</evidence>
<evidence type="ECO:0000269" key="3">
    <source>
    </source>
</evidence>
<dbReference type="EMBL" id="AB065888">
    <property type="protein sequence ID" value="BAC06105.1"/>
    <property type="status" value="ALT_SEQ"/>
    <property type="molecule type" value="Genomic_DNA"/>
</dbReference>
<dbReference type="EMBL" id="AF399477">
    <property type="status" value="NOT_ANNOTATED_CDS"/>
    <property type="molecule type" value="Genomic_DNA"/>
</dbReference>
<dbReference type="EMBL" id="AL356019">
    <property type="status" value="NOT_ANNOTATED_CDS"/>
    <property type="molecule type" value="Genomic_DNA"/>
</dbReference>
<dbReference type="EMBL" id="BK004619">
    <property type="status" value="NOT_ANNOTATED_CDS"/>
    <property type="molecule type" value="Genomic_DNA"/>
</dbReference>
<dbReference type="RefSeq" id="NP_001335202.1">
    <property type="nucleotide sequence ID" value="NM_001348273.1"/>
</dbReference>
<dbReference type="SMR" id="Q8NGC8"/>
<dbReference type="FunCoup" id="Q8NGC8">
    <property type="interactions" value="417"/>
</dbReference>
<dbReference type="GlyCosmos" id="Q8NGC8">
    <property type="glycosylation" value="1 site, No reported glycans"/>
</dbReference>
<dbReference type="GlyGen" id="Q8NGC8">
    <property type="glycosylation" value="2 sites"/>
</dbReference>
<dbReference type="BioMuta" id="OR11H7"/>
<dbReference type="DMDM" id="166215844"/>
<dbReference type="MassIVE" id="Q8NGC8"/>
<dbReference type="TopDownProteomics" id="Q8NGC8"/>
<dbReference type="DNASU" id="390441"/>
<dbReference type="Ensembl" id="ENST00000708727.2">
    <property type="protein sequence ID" value="ENSP00000517307.1"/>
    <property type="gene ID" value="ENSG00000291780.2"/>
</dbReference>
<dbReference type="GeneID" id="390441"/>
<dbReference type="KEGG" id="hsa:390441"/>
<dbReference type="MANE-Select" id="ENST00000708727.2">
    <property type="protein sequence ID" value="ENSP00000517307.1"/>
    <property type="RefSeq nucleotide sequence ID" value="NM_001348273.1"/>
    <property type="RefSeq protein sequence ID" value="NP_001335202.1"/>
</dbReference>
<dbReference type="AGR" id="HGNC:15350"/>
<dbReference type="CTD" id="390441"/>
<dbReference type="DisGeNET" id="390441"/>
<dbReference type="GeneCards" id="OR11H7"/>
<dbReference type="HGNC" id="HGNC:15350">
    <property type="gene designation" value="OR11H7"/>
</dbReference>
<dbReference type="neXtProt" id="NX_Q8NGC8"/>
<dbReference type="InParanoid" id="Q8NGC8"/>
<dbReference type="OrthoDB" id="9445499at2759"/>
<dbReference type="PAN-GO" id="Q8NGC8">
    <property type="GO annotations" value="6 GO annotations based on evolutionary models"/>
</dbReference>
<dbReference type="PhylomeDB" id="Q8NGC8"/>
<dbReference type="PathwayCommons" id="Q8NGC8"/>
<dbReference type="Reactome" id="R-HSA-9752946">
    <property type="pathway name" value="Expression and translocation of olfactory receptors"/>
</dbReference>
<dbReference type="BioGRID-ORCS" id="390441">
    <property type="hits" value="0 hits in 37 CRISPR screens"/>
</dbReference>
<dbReference type="Pharos" id="Q8NGC8">
    <property type="development level" value="Tdark"/>
</dbReference>
<dbReference type="PRO" id="PR:Q8NGC8"/>
<dbReference type="Proteomes" id="UP000005640">
    <property type="component" value="Unplaced"/>
</dbReference>
<dbReference type="RNAct" id="Q8NGC8">
    <property type="molecule type" value="protein"/>
</dbReference>
<dbReference type="GO" id="GO:0005886">
    <property type="term" value="C:plasma membrane"/>
    <property type="evidence" value="ECO:0007669"/>
    <property type="project" value="UniProtKB-SubCell"/>
</dbReference>
<dbReference type="GO" id="GO:0004930">
    <property type="term" value="F:G protein-coupled receptor activity"/>
    <property type="evidence" value="ECO:0007669"/>
    <property type="project" value="UniProtKB-KW"/>
</dbReference>
<dbReference type="GO" id="GO:0004984">
    <property type="term" value="F:olfactory receptor activity"/>
    <property type="evidence" value="ECO:0007669"/>
    <property type="project" value="InterPro"/>
</dbReference>
<dbReference type="CDD" id="cd15913">
    <property type="entry name" value="7tmA_OR11G-like"/>
    <property type="match status" value="1"/>
</dbReference>
<dbReference type="FunFam" id="1.20.1070.10:FF:000001">
    <property type="entry name" value="Olfactory receptor"/>
    <property type="match status" value="1"/>
</dbReference>
<dbReference type="Gene3D" id="1.20.1070.10">
    <property type="entry name" value="Rhodopsin 7-helix transmembrane proteins"/>
    <property type="match status" value="1"/>
</dbReference>
<dbReference type="InterPro" id="IPR000276">
    <property type="entry name" value="GPCR_Rhodpsn"/>
</dbReference>
<dbReference type="InterPro" id="IPR017452">
    <property type="entry name" value="GPCR_Rhodpsn_7TM"/>
</dbReference>
<dbReference type="InterPro" id="IPR000725">
    <property type="entry name" value="Olfact_rcpt"/>
</dbReference>
<dbReference type="InterPro" id="IPR050939">
    <property type="entry name" value="Olfactory_GPCR1"/>
</dbReference>
<dbReference type="PANTHER" id="PTHR24242">
    <property type="entry name" value="G-PROTEIN COUPLED RECEPTOR"/>
    <property type="match status" value="1"/>
</dbReference>
<dbReference type="PANTHER" id="PTHR24242:SF252">
    <property type="entry name" value="OLFACTORY RECEPTOR 11H7"/>
    <property type="match status" value="1"/>
</dbReference>
<dbReference type="Pfam" id="PF13853">
    <property type="entry name" value="7tm_4"/>
    <property type="match status" value="1"/>
</dbReference>
<dbReference type="PRINTS" id="PR00237">
    <property type="entry name" value="GPCRRHODOPSN"/>
</dbReference>
<dbReference type="PRINTS" id="PR00245">
    <property type="entry name" value="OLFACTORYR"/>
</dbReference>
<dbReference type="SUPFAM" id="SSF81321">
    <property type="entry name" value="Family A G protein-coupled receptor-like"/>
    <property type="match status" value="1"/>
</dbReference>
<dbReference type="PROSITE" id="PS00237">
    <property type="entry name" value="G_PROTEIN_RECEP_F1_1"/>
    <property type="match status" value="1"/>
</dbReference>
<dbReference type="PROSITE" id="PS50262">
    <property type="entry name" value="G_PROTEIN_RECEP_F1_2"/>
    <property type="match status" value="1"/>
</dbReference>
<keyword id="KW-1003">Cell membrane</keyword>
<keyword id="KW-1015">Disulfide bond</keyword>
<keyword id="KW-0297">G-protein coupled receptor</keyword>
<keyword id="KW-0325">Glycoprotein</keyword>
<keyword id="KW-0472">Membrane</keyword>
<keyword id="KW-0552">Olfaction</keyword>
<keyword id="KW-0675">Receptor</keyword>
<keyword id="KW-1185">Reference proteome</keyword>
<keyword id="KW-0716">Sensory transduction</keyword>
<keyword id="KW-0807">Transducer</keyword>
<keyword id="KW-0812">Transmembrane</keyword>
<keyword id="KW-1133">Transmembrane helix</keyword>